<accession>A8A775</accession>
<name>MURI_ECOHS</name>
<protein>
    <recommendedName>
        <fullName evidence="1">Glutamate racemase</fullName>
        <ecNumber evidence="1">5.1.1.3</ecNumber>
    </recommendedName>
</protein>
<gene>
    <name evidence="1" type="primary">murI</name>
    <name type="ordered locus">EcHS_A4201</name>
</gene>
<reference key="1">
    <citation type="journal article" date="2008" name="J. Bacteriol.">
        <title>The pangenome structure of Escherichia coli: comparative genomic analysis of E. coli commensal and pathogenic isolates.</title>
        <authorList>
            <person name="Rasko D.A."/>
            <person name="Rosovitz M.J."/>
            <person name="Myers G.S.A."/>
            <person name="Mongodin E.F."/>
            <person name="Fricke W.F."/>
            <person name="Gajer P."/>
            <person name="Crabtree J."/>
            <person name="Sebaihia M."/>
            <person name="Thomson N.R."/>
            <person name="Chaudhuri R."/>
            <person name="Henderson I.R."/>
            <person name="Sperandio V."/>
            <person name="Ravel J."/>
        </authorList>
    </citation>
    <scope>NUCLEOTIDE SEQUENCE [LARGE SCALE GENOMIC DNA]</scope>
    <source>
        <strain>HS</strain>
    </source>
</reference>
<keyword id="KW-0133">Cell shape</keyword>
<keyword id="KW-0961">Cell wall biogenesis/degradation</keyword>
<keyword id="KW-0413">Isomerase</keyword>
<keyword id="KW-0573">Peptidoglycan synthesis</keyword>
<proteinExistence type="inferred from homology"/>
<dbReference type="EC" id="5.1.1.3" evidence="1"/>
<dbReference type="EMBL" id="CP000802">
    <property type="protein sequence ID" value="ABV08379.1"/>
    <property type="molecule type" value="Genomic_DNA"/>
</dbReference>
<dbReference type="RefSeq" id="WP_000201827.1">
    <property type="nucleotide sequence ID" value="NC_009800.1"/>
</dbReference>
<dbReference type="SMR" id="A8A775"/>
<dbReference type="GeneID" id="75203201"/>
<dbReference type="KEGG" id="ecx:EcHS_A4201"/>
<dbReference type="HOGENOM" id="CLU_052344_2_0_6"/>
<dbReference type="UniPathway" id="UPA00219"/>
<dbReference type="GO" id="GO:0008881">
    <property type="term" value="F:glutamate racemase activity"/>
    <property type="evidence" value="ECO:0007669"/>
    <property type="project" value="UniProtKB-UniRule"/>
</dbReference>
<dbReference type="GO" id="GO:0071555">
    <property type="term" value="P:cell wall organization"/>
    <property type="evidence" value="ECO:0007669"/>
    <property type="project" value="UniProtKB-KW"/>
</dbReference>
<dbReference type="GO" id="GO:0009252">
    <property type="term" value="P:peptidoglycan biosynthetic process"/>
    <property type="evidence" value="ECO:0007669"/>
    <property type="project" value="UniProtKB-UniRule"/>
</dbReference>
<dbReference type="GO" id="GO:0008360">
    <property type="term" value="P:regulation of cell shape"/>
    <property type="evidence" value="ECO:0007669"/>
    <property type="project" value="UniProtKB-KW"/>
</dbReference>
<dbReference type="FunFam" id="3.40.50.1860:FF:000002">
    <property type="entry name" value="Glutamate racemase"/>
    <property type="match status" value="1"/>
</dbReference>
<dbReference type="Gene3D" id="3.40.50.1860">
    <property type="match status" value="2"/>
</dbReference>
<dbReference type="HAMAP" id="MF_00258">
    <property type="entry name" value="Glu_racemase"/>
    <property type="match status" value="1"/>
</dbReference>
<dbReference type="InterPro" id="IPR015942">
    <property type="entry name" value="Asp/Glu/hydantoin_racemase"/>
</dbReference>
<dbReference type="InterPro" id="IPR001920">
    <property type="entry name" value="Asp/Glu_race"/>
</dbReference>
<dbReference type="InterPro" id="IPR018187">
    <property type="entry name" value="Asp/Glu_racemase_AS_1"/>
</dbReference>
<dbReference type="InterPro" id="IPR033134">
    <property type="entry name" value="Asp/Glu_racemase_AS_2"/>
</dbReference>
<dbReference type="InterPro" id="IPR004391">
    <property type="entry name" value="Glu_race"/>
</dbReference>
<dbReference type="NCBIfam" id="TIGR00067">
    <property type="entry name" value="glut_race"/>
    <property type="match status" value="1"/>
</dbReference>
<dbReference type="NCBIfam" id="NF002034">
    <property type="entry name" value="PRK00865.1-1"/>
    <property type="match status" value="1"/>
</dbReference>
<dbReference type="PANTHER" id="PTHR21198">
    <property type="entry name" value="GLUTAMATE RACEMASE"/>
    <property type="match status" value="1"/>
</dbReference>
<dbReference type="PANTHER" id="PTHR21198:SF2">
    <property type="entry name" value="GLUTAMATE RACEMASE"/>
    <property type="match status" value="1"/>
</dbReference>
<dbReference type="Pfam" id="PF01177">
    <property type="entry name" value="Asp_Glu_race"/>
    <property type="match status" value="1"/>
</dbReference>
<dbReference type="SUPFAM" id="SSF53681">
    <property type="entry name" value="Aspartate/glutamate racemase"/>
    <property type="match status" value="2"/>
</dbReference>
<dbReference type="PROSITE" id="PS00923">
    <property type="entry name" value="ASP_GLU_RACEMASE_1"/>
    <property type="match status" value="1"/>
</dbReference>
<dbReference type="PROSITE" id="PS00924">
    <property type="entry name" value="ASP_GLU_RACEMASE_2"/>
    <property type="match status" value="1"/>
</dbReference>
<organism>
    <name type="scientific">Escherichia coli O9:H4 (strain HS)</name>
    <dbReference type="NCBI Taxonomy" id="331112"/>
    <lineage>
        <taxon>Bacteria</taxon>
        <taxon>Pseudomonadati</taxon>
        <taxon>Pseudomonadota</taxon>
        <taxon>Gammaproteobacteria</taxon>
        <taxon>Enterobacterales</taxon>
        <taxon>Enterobacteriaceae</taxon>
        <taxon>Escherichia</taxon>
    </lineage>
</organism>
<comment type="function">
    <text evidence="1">Provides the (R)-glutamate required for cell wall biosynthesis.</text>
</comment>
<comment type="catalytic activity">
    <reaction evidence="1">
        <text>L-glutamate = D-glutamate</text>
        <dbReference type="Rhea" id="RHEA:12813"/>
        <dbReference type="ChEBI" id="CHEBI:29985"/>
        <dbReference type="ChEBI" id="CHEBI:29986"/>
        <dbReference type="EC" id="5.1.1.3"/>
    </reaction>
</comment>
<comment type="pathway">
    <text evidence="1">Cell wall biogenesis; peptidoglycan biosynthesis.</text>
</comment>
<comment type="similarity">
    <text evidence="1">Belongs to the aspartate/glutamate racemases family.</text>
</comment>
<feature type="chain" id="PRO_1000059067" description="Glutamate racemase">
    <location>
        <begin position="1"/>
        <end position="285"/>
    </location>
</feature>
<feature type="active site" description="Proton donor/acceptor" evidence="1">
    <location>
        <position position="92"/>
    </location>
</feature>
<feature type="active site" description="Proton donor/acceptor" evidence="1">
    <location>
        <position position="204"/>
    </location>
</feature>
<feature type="binding site" evidence="1">
    <location>
        <begin position="28"/>
        <end position="29"/>
    </location>
    <ligand>
        <name>substrate</name>
    </ligand>
</feature>
<feature type="binding site" evidence="1">
    <location>
        <begin position="60"/>
        <end position="61"/>
    </location>
    <ligand>
        <name>substrate</name>
    </ligand>
</feature>
<feature type="binding site" evidence="1">
    <location>
        <begin position="93"/>
        <end position="94"/>
    </location>
    <ligand>
        <name>substrate</name>
    </ligand>
</feature>
<feature type="binding site" evidence="1">
    <location>
        <begin position="205"/>
        <end position="206"/>
    </location>
    <ligand>
        <name>substrate</name>
    </ligand>
</feature>
<evidence type="ECO:0000255" key="1">
    <source>
        <dbReference type="HAMAP-Rule" id="MF_00258"/>
    </source>
</evidence>
<sequence>MATKLQDGNTPCLAATPSEPRPTVLVFDSGVGGLSVYDEIRHLLPDLHYIYAFDNVAFPYGEKSEEFIVERVVAIVTAVQERYPLALAVVACNTASTVSLPALREKFDFPVVGVVPAIKPAARLTANGIVGLLATRGTVKRSYTHELIARFANECQIEMLGSAEMVELAEAKLHGEDVSLDALKRILRPWLRMKEPPDTVVLGCTHFPLLQEELLQVLPEGTRLVDSGAAIARRTAWLLEHEAPDAKSADANIAFCMAMTPEAEQLLPVLQRYGFETLEKLAVLG</sequence>